<gene>
    <name evidence="1" type="primary">murI</name>
    <name type="ordered locus">ECIAI1_4177</name>
</gene>
<keyword id="KW-0133">Cell shape</keyword>
<keyword id="KW-0961">Cell wall biogenesis/degradation</keyword>
<keyword id="KW-0413">Isomerase</keyword>
<keyword id="KW-0573">Peptidoglycan synthesis</keyword>
<protein>
    <recommendedName>
        <fullName evidence="1">Glutamate racemase</fullName>
        <ecNumber evidence="1">5.1.1.3</ecNumber>
    </recommendedName>
</protein>
<dbReference type="EC" id="5.1.1.3" evidence="1"/>
<dbReference type="EMBL" id="CU928160">
    <property type="protein sequence ID" value="CAR00948.1"/>
    <property type="molecule type" value="Genomic_DNA"/>
</dbReference>
<dbReference type="RefSeq" id="WP_000201827.1">
    <property type="nucleotide sequence ID" value="NC_011741.1"/>
</dbReference>
<dbReference type="SMR" id="B7M723"/>
<dbReference type="GeneID" id="75203201"/>
<dbReference type="KEGG" id="ecr:ECIAI1_4177"/>
<dbReference type="HOGENOM" id="CLU_052344_2_0_6"/>
<dbReference type="UniPathway" id="UPA00219"/>
<dbReference type="GO" id="GO:0008881">
    <property type="term" value="F:glutamate racemase activity"/>
    <property type="evidence" value="ECO:0007669"/>
    <property type="project" value="UniProtKB-UniRule"/>
</dbReference>
<dbReference type="GO" id="GO:0071555">
    <property type="term" value="P:cell wall organization"/>
    <property type="evidence" value="ECO:0007669"/>
    <property type="project" value="UniProtKB-KW"/>
</dbReference>
<dbReference type="GO" id="GO:0009252">
    <property type="term" value="P:peptidoglycan biosynthetic process"/>
    <property type="evidence" value="ECO:0007669"/>
    <property type="project" value="UniProtKB-UniRule"/>
</dbReference>
<dbReference type="GO" id="GO:0008360">
    <property type="term" value="P:regulation of cell shape"/>
    <property type="evidence" value="ECO:0007669"/>
    <property type="project" value="UniProtKB-KW"/>
</dbReference>
<dbReference type="FunFam" id="3.40.50.1860:FF:000002">
    <property type="entry name" value="Glutamate racemase"/>
    <property type="match status" value="1"/>
</dbReference>
<dbReference type="Gene3D" id="3.40.50.1860">
    <property type="match status" value="2"/>
</dbReference>
<dbReference type="HAMAP" id="MF_00258">
    <property type="entry name" value="Glu_racemase"/>
    <property type="match status" value="1"/>
</dbReference>
<dbReference type="InterPro" id="IPR015942">
    <property type="entry name" value="Asp/Glu/hydantoin_racemase"/>
</dbReference>
<dbReference type="InterPro" id="IPR001920">
    <property type="entry name" value="Asp/Glu_race"/>
</dbReference>
<dbReference type="InterPro" id="IPR018187">
    <property type="entry name" value="Asp/Glu_racemase_AS_1"/>
</dbReference>
<dbReference type="InterPro" id="IPR033134">
    <property type="entry name" value="Asp/Glu_racemase_AS_2"/>
</dbReference>
<dbReference type="InterPro" id="IPR004391">
    <property type="entry name" value="Glu_race"/>
</dbReference>
<dbReference type="NCBIfam" id="TIGR00067">
    <property type="entry name" value="glut_race"/>
    <property type="match status" value="1"/>
</dbReference>
<dbReference type="NCBIfam" id="NF002034">
    <property type="entry name" value="PRK00865.1-1"/>
    <property type="match status" value="1"/>
</dbReference>
<dbReference type="PANTHER" id="PTHR21198">
    <property type="entry name" value="GLUTAMATE RACEMASE"/>
    <property type="match status" value="1"/>
</dbReference>
<dbReference type="PANTHER" id="PTHR21198:SF2">
    <property type="entry name" value="GLUTAMATE RACEMASE"/>
    <property type="match status" value="1"/>
</dbReference>
<dbReference type="Pfam" id="PF01177">
    <property type="entry name" value="Asp_Glu_race"/>
    <property type="match status" value="1"/>
</dbReference>
<dbReference type="SUPFAM" id="SSF53681">
    <property type="entry name" value="Aspartate/glutamate racemase"/>
    <property type="match status" value="2"/>
</dbReference>
<dbReference type="PROSITE" id="PS00923">
    <property type="entry name" value="ASP_GLU_RACEMASE_1"/>
    <property type="match status" value="1"/>
</dbReference>
<dbReference type="PROSITE" id="PS00924">
    <property type="entry name" value="ASP_GLU_RACEMASE_2"/>
    <property type="match status" value="1"/>
</dbReference>
<accession>B7M723</accession>
<name>MURI_ECO8A</name>
<proteinExistence type="inferred from homology"/>
<feature type="chain" id="PRO_1000119187" description="Glutamate racemase">
    <location>
        <begin position="1"/>
        <end position="285"/>
    </location>
</feature>
<feature type="active site" description="Proton donor/acceptor" evidence="1">
    <location>
        <position position="92"/>
    </location>
</feature>
<feature type="active site" description="Proton donor/acceptor" evidence="1">
    <location>
        <position position="204"/>
    </location>
</feature>
<feature type="binding site" evidence="1">
    <location>
        <begin position="28"/>
        <end position="29"/>
    </location>
    <ligand>
        <name>substrate</name>
    </ligand>
</feature>
<feature type="binding site" evidence="1">
    <location>
        <begin position="60"/>
        <end position="61"/>
    </location>
    <ligand>
        <name>substrate</name>
    </ligand>
</feature>
<feature type="binding site" evidence="1">
    <location>
        <begin position="93"/>
        <end position="94"/>
    </location>
    <ligand>
        <name>substrate</name>
    </ligand>
</feature>
<feature type="binding site" evidence="1">
    <location>
        <begin position="205"/>
        <end position="206"/>
    </location>
    <ligand>
        <name>substrate</name>
    </ligand>
</feature>
<sequence>MATKLQDGNTPCLAATPSEPRPTVLVFDSGVGGLSVYDEIRHLLPDLHYIYAFDNVAFPYGEKSEEFIVERVVAIVTAVQERYPLALAVVACNTASTVSLPALREKFDFPVVGVVPAIKPAARLTANGIVGLLATRGTVKRSYTHELIARFANECQIEMLGSAEMVELAEAKLHGEDVSLDALKRILRPWLRMKEPPDTVVLGCTHFPLLQEELLQVLPEGTRLVDSGAAIARRTAWLLEHEAPDAKSADANIAFCMAMTPEAEQLLPVLQRYGFETLEKLAVLG</sequence>
<reference key="1">
    <citation type="journal article" date="2009" name="PLoS Genet.">
        <title>Organised genome dynamics in the Escherichia coli species results in highly diverse adaptive paths.</title>
        <authorList>
            <person name="Touchon M."/>
            <person name="Hoede C."/>
            <person name="Tenaillon O."/>
            <person name="Barbe V."/>
            <person name="Baeriswyl S."/>
            <person name="Bidet P."/>
            <person name="Bingen E."/>
            <person name="Bonacorsi S."/>
            <person name="Bouchier C."/>
            <person name="Bouvet O."/>
            <person name="Calteau A."/>
            <person name="Chiapello H."/>
            <person name="Clermont O."/>
            <person name="Cruveiller S."/>
            <person name="Danchin A."/>
            <person name="Diard M."/>
            <person name="Dossat C."/>
            <person name="Karoui M.E."/>
            <person name="Frapy E."/>
            <person name="Garry L."/>
            <person name="Ghigo J.M."/>
            <person name="Gilles A.M."/>
            <person name="Johnson J."/>
            <person name="Le Bouguenec C."/>
            <person name="Lescat M."/>
            <person name="Mangenot S."/>
            <person name="Martinez-Jehanne V."/>
            <person name="Matic I."/>
            <person name="Nassif X."/>
            <person name="Oztas S."/>
            <person name="Petit M.A."/>
            <person name="Pichon C."/>
            <person name="Rouy Z."/>
            <person name="Ruf C.S."/>
            <person name="Schneider D."/>
            <person name="Tourret J."/>
            <person name="Vacherie B."/>
            <person name="Vallenet D."/>
            <person name="Medigue C."/>
            <person name="Rocha E.P.C."/>
            <person name="Denamur E."/>
        </authorList>
    </citation>
    <scope>NUCLEOTIDE SEQUENCE [LARGE SCALE GENOMIC DNA]</scope>
    <source>
        <strain>IAI1</strain>
    </source>
</reference>
<comment type="function">
    <text evidence="1">Provides the (R)-glutamate required for cell wall biosynthesis.</text>
</comment>
<comment type="catalytic activity">
    <reaction evidence="1">
        <text>L-glutamate = D-glutamate</text>
        <dbReference type="Rhea" id="RHEA:12813"/>
        <dbReference type="ChEBI" id="CHEBI:29985"/>
        <dbReference type="ChEBI" id="CHEBI:29986"/>
        <dbReference type="EC" id="5.1.1.3"/>
    </reaction>
</comment>
<comment type="pathway">
    <text evidence="1">Cell wall biogenesis; peptidoglycan biosynthesis.</text>
</comment>
<comment type="similarity">
    <text evidence="1">Belongs to the aspartate/glutamate racemases family.</text>
</comment>
<organism>
    <name type="scientific">Escherichia coli O8 (strain IAI1)</name>
    <dbReference type="NCBI Taxonomy" id="585034"/>
    <lineage>
        <taxon>Bacteria</taxon>
        <taxon>Pseudomonadati</taxon>
        <taxon>Pseudomonadota</taxon>
        <taxon>Gammaproteobacteria</taxon>
        <taxon>Enterobacterales</taxon>
        <taxon>Enterobacteriaceae</taxon>
        <taxon>Escherichia</taxon>
    </lineage>
</organism>
<evidence type="ECO:0000255" key="1">
    <source>
        <dbReference type="HAMAP-Rule" id="MF_00258"/>
    </source>
</evidence>